<keyword id="KW-0030">Aminoacyl-tRNA synthetase</keyword>
<keyword id="KW-0067">ATP-binding</keyword>
<keyword id="KW-0963">Cytoplasm</keyword>
<keyword id="KW-0436">Ligase</keyword>
<keyword id="KW-0547">Nucleotide-binding</keyword>
<keyword id="KW-0648">Protein biosynthesis</keyword>
<keyword id="KW-1185">Reference proteome</keyword>
<name>SYGA_COPPD</name>
<gene>
    <name evidence="1" type="primary">glyQ</name>
    <name type="ordered locus">COPRO5265_0493</name>
</gene>
<dbReference type="EC" id="6.1.1.14" evidence="1"/>
<dbReference type="EMBL" id="CP001145">
    <property type="protein sequence ID" value="ACI17775.1"/>
    <property type="molecule type" value="Genomic_DNA"/>
</dbReference>
<dbReference type="RefSeq" id="WP_012544427.1">
    <property type="nucleotide sequence ID" value="NC_011295.1"/>
</dbReference>
<dbReference type="SMR" id="B5Y7V5"/>
<dbReference type="STRING" id="309798.COPRO5265_0493"/>
<dbReference type="KEGG" id="cpo:COPRO5265_0493"/>
<dbReference type="eggNOG" id="COG0752">
    <property type="taxonomic scope" value="Bacteria"/>
</dbReference>
<dbReference type="HOGENOM" id="CLU_057066_1_0_9"/>
<dbReference type="OrthoDB" id="9802183at2"/>
<dbReference type="Proteomes" id="UP000001732">
    <property type="component" value="Chromosome"/>
</dbReference>
<dbReference type="GO" id="GO:0005829">
    <property type="term" value="C:cytosol"/>
    <property type="evidence" value="ECO:0007669"/>
    <property type="project" value="TreeGrafter"/>
</dbReference>
<dbReference type="GO" id="GO:0005524">
    <property type="term" value="F:ATP binding"/>
    <property type="evidence" value="ECO:0007669"/>
    <property type="project" value="UniProtKB-UniRule"/>
</dbReference>
<dbReference type="GO" id="GO:0004820">
    <property type="term" value="F:glycine-tRNA ligase activity"/>
    <property type="evidence" value="ECO:0007669"/>
    <property type="project" value="UniProtKB-UniRule"/>
</dbReference>
<dbReference type="GO" id="GO:0006426">
    <property type="term" value="P:glycyl-tRNA aminoacylation"/>
    <property type="evidence" value="ECO:0007669"/>
    <property type="project" value="UniProtKB-UniRule"/>
</dbReference>
<dbReference type="FunFam" id="3.30.930.10:FF:000006">
    <property type="entry name" value="Glycine--tRNA ligase alpha subunit"/>
    <property type="match status" value="1"/>
</dbReference>
<dbReference type="Gene3D" id="3.30.930.10">
    <property type="entry name" value="Bira Bifunctional Protein, Domain 2"/>
    <property type="match status" value="1"/>
</dbReference>
<dbReference type="Gene3D" id="1.20.58.180">
    <property type="entry name" value="Class II aaRS and biotin synthetases, domain 2"/>
    <property type="match status" value="1"/>
</dbReference>
<dbReference type="HAMAP" id="MF_00254">
    <property type="entry name" value="Gly_tRNA_synth_alpha"/>
    <property type="match status" value="1"/>
</dbReference>
<dbReference type="InterPro" id="IPR045864">
    <property type="entry name" value="aa-tRNA-synth_II/BPL/LPL"/>
</dbReference>
<dbReference type="InterPro" id="IPR006194">
    <property type="entry name" value="Gly-tRNA-synth_heterodimer"/>
</dbReference>
<dbReference type="InterPro" id="IPR002310">
    <property type="entry name" value="Gly-tRNA_ligase_asu"/>
</dbReference>
<dbReference type="NCBIfam" id="TIGR00388">
    <property type="entry name" value="glyQ"/>
    <property type="match status" value="1"/>
</dbReference>
<dbReference type="NCBIfam" id="NF006827">
    <property type="entry name" value="PRK09348.1"/>
    <property type="match status" value="1"/>
</dbReference>
<dbReference type="PANTHER" id="PTHR30075:SF2">
    <property type="entry name" value="GLYCINE--TRNA LIGASE, CHLOROPLASTIC_MITOCHONDRIAL 2"/>
    <property type="match status" value="1"/>
</dbReference>
<dbReference type="PANTHER" id="PTHR30075">
    <property type="entry name" value="GLYCYL-TRNA SYNTHETASE"/>
    <property type="match status" value="1"/>
</dbReference>
<dbReference type="Pfam" id="PF02091">
    <property type="entry name" value="tRNA-synt_2e"/>
    <property type="match status" value="1"/>
</dbReference>
<dbReference type="PRINTS" id="PR01044">
    <property type="entry name" value="TRNASYNTHGA"/>
</dbReference>
<dbReference type="SUPFAM" id="SSF55681">
    <property type="entry name" value="Class II aaRS and biotin synthetases"/>
    <property type="match status" value="1"/>
</dbReference>
<dbReference type="PROSITE" id="PS50861">
    <property type="entry name" value="AA_TRNA_LIGASE_II_GLYAB"/>
    <property type="match status" value="1"/>
</dbReference>
<comment type="catalytic activity">
    <reaction evidence="1">
        <text>tRNA(Gly) + glycine + ATP = glycyl-tRNA(Gly) + AMP + diphosphate</text>
        <dbReference type="Rhea" id="RHEA:16013"/>
        <dbReference type="Rhea" id="RHEA-COMP:9664"/>
        <dbReference type="Rhea" id="RHEA-COMP:9683"/>
        <dbReference type="ChEBI" id="CHEBI:30616"/>
        <dbReference type="ChEBI" id="CHEBI:33019"/>
        <dbReference type="ChEBI" id="CHEBI:57305"/>
        <dbReference type="ChEBI" id="CHEBI:78442"/>
        <dbReference type="ChEBI" id="CHEBI:78522"/>
        <dbReference type="ChEBI" id="CHEBI:456215"/>
        <dbReference type="EC" id="6.1.1.14"/>
    </reaction>
</comment>
<comment type="subunit">
    <text evidence="1">Tetramer of two alpha and two beta subunits.</text>
</comment>
<comment type="subcellular location">
    <subcellularLocation>
        <location evidence="1">Cytoplasm</location>
    </subcellularLocation>
</comment>
<comment type="similarity">
    <text evidence="1">Belongs to the class-II aminoacyl-tRNA synthetase family.</text>
</comment>
<sequence>MTFQELITNLTDFWIKQGCILAQPYDVEVGAGTMNPNTFFRVLGPEPWRVVYVEPSRRPADGRYGENPNRLYMHHQMQVILKPAPFNVQDLYLQSLEAIGISLSEHDVRFVEDNWESPTLGAWGIGWEVWLDGMEITQFTYFQQAGGYDLSVVPAELTYGLERIAMYLQRVENVFDLKWSEDITYGEMRKTEEYQHCVYAFEESDVNKLRSWFDSYEDEAMRLIDKGLTLPAYDYVLKCSHTFNLLDARGGFSAAERSSYVLRIRKLSSRIAKQWLKEREEKEFPLMGRWN</sequence>
<reference key="1">
    <citation type="submission" date="2008-08" db="EMBL/GenBank/DDBJ databases">
        <title>The complete genome sequence of Coprothermobacter proteolyticus strain ATCC 5245 / DSM 5265 / BT.</title>
        <authorList>
            <person name="Dodson R.J."/>
            <person name="Durkin A.S."/>
            <person name="Wu M."/>
            <person name="Eisen J."/>
            <person name="Sutton G."/>
        </authorList>
    </citation>
    <scope>NUCLEOTIDE SEQUENCE [LARGE SCALE GENOMIC DNA]</scope>
    <source>
        <strain>ATCC 35245 / DSM 5265 / OCM 4 / BT</strain>
    </source>
</reference>
<protein>
    <recommendedName>
        <fullName evidence="1">Glycine--tRNA ligase alpha subunit</fullName>
        <ecNumber evidence="1">6.1.1.14</ecNumber>
    </recommendedName>
    <alternativeName>
        <fullName evidence="1">Glycyl-tRNA synthetase alpha subunit</fullName>
        <shortName evidence="1">GlyRS</shortName>
    </alternativeName>
</protein>
<accession>B5Y7V5</accession>
<evidence type="ECO:0000255" key="1">
    <source>
        <dbReference type="HAMAP-Rule" id="MF_00254"/>
    </source>
</evidence>
<feature type="chain" id="PRO_1000101177" description="Glycine--tRNA ligase alpha subunit">
    <location>
        <begin position="1"/>
        <end position="291"/>
    </location>
</feature>
<organism>
    <name type="scientific">Coprothermobacter proteolyticus (strain ATCC 35245 / DSM 5265 / OCM 4 / BT)</name>
    <dbReference type="NCBI Taxonomy" id="309798"/>
    <lineage>
        <taxon>Bacteria</taxon>
        <taxon>Pseudomonadati</taxon>
        <taxon>Coprothermobacterota</taxon>
        <taxon>Coprothermobacteria</taxon>
        <taxon>Coprothermobacterales</taxon>
        <taxon>Coprothermobacteraceae</taxon>
        <taxon>Coprothermobacter</taxon>
    </lineage>
</organism>
<proteinExistence type="inferred from homology"/>